<keyword id="KW-0539">Nucleus</keyword>
<keyword id="KW-0597">Phosphoprotein</keyword>
<keyword id="KW-1185">Reference proteome</keyword>
<keyword id="KW-0698">rRNA processing</keyword>
<accession>Q9VJZ7</accession>
<accession>Q6AWH7</accession>
<name>RRP1L_DROME</name>
<sequence length="687" mass="78996">MVTRKKPVKRNAEAAEIQVEQEEDASQPKVAKELMVVAQEVKIIRALACNDVVERNRQIRILRKWFKARAGSSFPFNEDDFMRIWKGLYYTMWMSDKPLVQEELAEKLAQMVDSFGGNTACSLAYFSAFMRTMCQEYFGIDQWRMDKFLMLTRRMVRYLLRFLKQNNWNADLIAAFNSSMQLSVMSEQPKSRGMTMHYLDVFFEELAKAANGEITAAQVNMFLRPFVTYIATQRDAKLVAQCRTRVLYHLMYQSDLGRQYSEKYNAWKQMGFPTASIDDIEKLDSGFDEEDDEVNAEEEQPRATSLDPRAGNVDVHMPELPLNADCVLDELQTQLRTNDFNSKRRKGLRKLIQIFETYQRGEFPLGVRTMPKVEGQTLSEMVEQKVAALDKMEDEVFATGRKLKKLNKSKRKRLLQSINFEEVDEHNYDEVISKALPPELQKKVNYNAKVRSSINNAWVVEEVKEAEPKSKKAKKEEPPQQNKDDQTKVKKKSQLKPKNDQSKPKIEDQPTLKAEKEEPAKRKKLDHSKTKEEQSKPKTDEQPKPTPKVEGQSKAKPTPKTKAAGVDDDAPTNGWDAPLEDGEQDIFVPSRKLQVKQANSKLPQSTPKQPARAEFATPQTGSGKHVRIVTKSNCIYPKSDYYRQLKLSPQVPYDANRLPGKSALKPHWIPGPIHPSYKAKRLFNDTL</sequence>
<proteinExistence type="evidence at protein level"/>
<reference key="1">
    <citation type="journal article" date="2000" name="Science">
        <title>The genome sequence of Drosophila melanogaster.</title>
        <authorList>
            <person name="Adams M.D."/>
            <person name="Celniker S.E."/>
            <person name="Holt R.A."/>
            <person name="Evans C.A."/>
            <person name="Gocayne J.D."/>
            <person name="Amanatides P.G."/>
            <person name="Scherer S.E."/>
            <person name="Li P.W."/>
            <person name="Hoskins R.A."/>
            <person name="Galle R.F."/>
            <person name="George R.A."/>
            <person name="Lewis S.E."/>
            <person name="Richards S."/>
            <person name="Ashburner M."/>
            <person name="Henderson S.N."/>
            <person name="Sutton G.G."/>
            <person name="Wortman J.R."/>
            <person name="Yandell M.D."/>
            <person name="Zhang Q."/>
            <person name="Chen L.X."/>
            <person name="Brandon R.C."/>
            <person name="Rogers Y.-H.C."/>
            <person name="Blazej R.G."/>
            <person name="Champe M."/>
            <person name="Pfeiffer B.D."/>
            <person name="Wan K.H."/>
            <person name="Doyle C."/>
            <person name="Baxter E.G."/>
            <person name="Helt G."/>
            <person name="Nelson C.R."/>
            <person name="Miklos G.L.G."/>
            <person name="Abril J.F."/>
            <person name="Agbayani A."/>
            <person name="An H.-J."/>
            <person name="Andrews-Pfannkoch C."/>
            <person name="Baldwin D."/>
            <person name="Ballew R.M."/>
            <person name="Basu A."/>
            <person name="Baxendale J."/>
            <person name="Bayraktaroglu L."/>
            <person name="Beasley E.M."/>
            <person name="Beeson K.Y."/>
            <person name="Benos P.V."/>
            <person name="Berman B.P."/>
            <person name="Bhandari D."/>
            <person name="Bolshakov S."/>
            <person name="Borkova D."/>
            <person name="Botchan M.R."/>
            <person name="Bouck J."/>
            <person name="Brokstein P."/>
            <person name="Brottier P."/>
            <person name="Burtis K.C."/>
            <person name="Busam D.A."/>
            <person name="Butler H."/>
            <person name="Cadieu E."/>
            <person name="Center A."/>
            <person name="Chandra I."/>
            <person name="Cherry J.M."/>
            <person name="Cawley S."/>
            <person name="Dahlke C."/>
            <person name="Davenport L.B."/>
            <person name="Davies P."/>
            <person name="de Pablos B."/>
            <person name="Delcher A."/>
            <person name="Deng Z."/>
            <person name="Mays A.D."/>
            <person name="Dew I."/>
            <person name="Dietz S.M."/>
            <person name="Dodson K."/>
            <person name="Doup L.E."/>
            <person name="Downes M."/>
            <person name="Dugan-Rocha S."/>
            <person name="Dunkov B.C."/>
            <person name="Dunn P."/>
            <person name="Durbin K.J."/>
            <person name="Evangelista C.C."/>
            <person name="Ferraz C."/>
            <person name="Ferriera S."/>
            <person name="Fleischmann W."/>
            <person name="Fosler C."/>
            <person name="Gabrielian A.E."/>
            <person name="Garg N.S."/>
            <person name="Gelbart W.M."/>
            <person name="Glasser K."/>
            <person name="Glodek A."/>
            <person name="Gong F."/>
            <person name="Gorrell J.H."/>
            <person name="Gu Z."/>
            <person name="Guan P."/>
            <person name="Harris M."/>
            <person name="Harris N.L."/>
            <person name="Harvey D.A."/>
            <person name="Heiman T.J."/>
            <person name="Hernandez J.R."/>
            <person name="Houck J."/>
            <person name="Hostin D."/>
            <person name="Houston K.A."/>
            <person name="Howland T.J."/>
            <person name="Wei M.-H."/>
            <person name="Ibegwam C."/>
            <person name="Jalali M."/>
            <person name="Kalush F."/>
            <person name="Karpen G.H."/>
            <person name="Ke Z."/>
            <person name="Kennison J.A."/>
            <person name="Ketchum K.A."/>
            <person name="Kimmel B.E."/>
            <person name="Kodira C.D."/>
            <person name="Kraft C.L."/>
            <person name="Kravitz S."/>
            <person name="Kulp D."/>
            <person name="Lai Z."/>
            <person name="Lasko P."/>
            <person name="Lei Y."/>
            <person name="Levitsky A.A."/>
            <person name="Li J.H."/>
            <person name="Li Z."/>
            <person name="Liang Y."/>
            <person name="Lin X."/>
            <person name="Liu X."/>
            <person name="Mattei B."/>
            <person name="McIntosh T.C."/>
            <person name="McLeod M.P."/>
            <person name="McPherson D."/>
            <person name="Merkulov G."/>
            <person name="Milshina N.V."/>
            <person name="Mobarry C."/>
            <person name="Morris J."/>
            <person name="Moshrefi A."/>
            <person name="Mount S.M."/>
            <person name="Moy M."/>
            <person name="Murphy B."/>
            <person name="Murphy L."/>
            <person name="Muzny D.M."/>
            <person name="Nelson D.L."/>
            <person name="Nelson D.R."/>
            <person name="Nelson K.A."/>
            <person name="Nixon K."/>
            <person name="Nusskern D.R."/>
            <person name="Pacleb J.M."/>
            <person name="Palazzolo M."/>
            <person name="Pittman G.S."/>
            <person name="Pan S."/>
            <person name="Pollard J."/>
            <person name="Puri V."/>
            <person name="Reese M.G."/>
            <person name="Reinert K."/>
            <person name="Remington K."/>
            <person name="Saunders R.D.C."/>
            <person name="Scheeler F."/>
            <person name="Shen H."/>
            <person name="Shue B.C."/>
            <person name="Siden-Kiamos I."/>
            <person name="Simpson M."/>
            <person name="Skupski M.P."/>
            <person name="Smith T.J."/>
            <person name="Spier E."/>
            <person name="Spradling A.C."/>
            <person name="Stapleton M."/>
            <person name="Strong R."/>
            <person name="Sun E."/>
            <person name="Svirskas R."/>
            <person name="Tector C."/>
            <person name="Turner R."/>
            <person name="Venter E."/>
            <person name="Wang A.H."/>
            <person name="Wang X."/>
            <person name="Wang Z.-Y."/>
            <person name="Wassarman D.A."/>
            <person name="Weinstock G.M."/>
            <person name="Weissenbach J."/>
            <person name="Williams S.M."/>
            <person name="Woodage T."/>
            <person name="Worley K.C."/>
            <person name="Wu D."/>
            <person name="Yang S."/>
            <person name="Yao Q.A."/>
            <person name="Ye J."/>
            <person name="Yeh R.-F."/>
            <person name="Zaveri J.S."/>
            <person name="Zhan M."/>
            <person name="Zhang G."/>
            <person name="Zhao Q."/>
            <person name="Zheng L."/>
            <person name="Zheng X.H."/>
            <person name="Zhong F.N."/>
            <person name="Zhong W."/>
            <person name="Zhou X."/>
            <person name="Zhu S.C."/>
            <person name="Zhu X."/>
            <person name="Smith H.O."/>
            <person name="Gibbs R.A."/>
            <person name="Myers E.W."/>
            <person name="Rubin G.M."/>
            <person name="Venter J.C."/>
        </authorList>
    </citation>
    <scope>NUCLEOTIDE SEQUENCE [LARGE SCALE GENOMIC DNA]</scope>
    <source>
        <strain>Berkeley</strain>
    </source>
</reference>
<reference key="2">
    <citation type="journal article" date="2002" name="Genome Biol.">
        <title>Annotation of the Drosophila melanogaster euchromatic genome: a systematic review.</title>
        <authorList>
            <person name="Misra S."/>
            <person name="Crosby M.A."/>
            <person name="Mungall C.J."/>
            <person name="Matthews B.B."/>
            <person name="Campbell K.S."/>
            <person name="Hradecky P."/>
            <person name="Huang Y."/>
            <person name="Kaminker J.S."/>
            <person name="Millburn G.H."/>
            <person name="Prochnik S.E."/>
            <person name="Smith C.D."/>
            <person name="Tupy J.L."/>
            <person name="Whitfield E.J."/>
            <person name="Bayraktaroglu L."/>
            <person name="Berman B.P."/>
            <person name="Bettencourt B.R."/>
            <person name="Celniker S.E."/>
            <person name="de Grey A.D.N.J."/>
            <person name="Drysdale R.A."/>
            <person name="Harris N.L."/>
            <person name="Richter J."/>
            <person name="Russo S."/>
            <person name="Schroeder A.J."/>
            <person name="Shu S.Q."/>
            <person name="Stapleton M."/>
            <person name="Yamada C."/>
            <person name="Ashburner M."/>
            <person name="Gelbart W.M."/>
            <person name="Rubin G.M."/>
            <person name="Lewis S.E."/>
        </authorList>
    </citation>
    <scope>GENOME REANNOTATION</scope>
    <source>
        <strain>Berkeley</strain>
    </source>
</reference>
<reference key="3">
    <citation type="submission" date="2004-08" db="EMBL/GenBank/DDBJ databases">
        <authorList>
            <person name="Stapleton M."/>
            <person name="Carlson J.W."/>
            <person name="Chavez C."/>
            <person name="Frise E."/>
            <person name="George R.A."/>
            <person name="Pacleb J.M."/>
            <person name="Park S."/>
            <person name="Wan K.H."/>
            <person name="Yu C."/>
            <person name="Rubin G.M."/>
            <person name="Celniker S.E."/>
        </authorList>
    </citation>
    <scope>NUCLEOTIDE SEQUENCE [LARGE SCALE MRNA]</scope>
    <source>
        <strain>Berkeley</strain>
        <tissue>Embryo</tissue>
    </source>
</reference>
<reference key="4">
    <citation type="journal article" date="2008" name="J. Proteome Res.">
        <title>Phosphoproteome analysis of Drosophila melanogaster embryos.</title>
        <authorList>
            <person name="Zhai B."/>
            <person name="Villen J."/>
            <person name="Beausoleil S.A."/>
            <person name="Mintseris J."/>
            <person name="Gygi S.P."/>
        </authorList>
    </citation>
    <scope>PHOSPHORYLATION [LARGE SCALE ANALYSIS] AT THR-617; THR-620 AND SER-622</scope>
    <scope>IDENTIFICATION BY MASS SPECTROMETRY</scope>
    <source>
        <tissue>Embryo</tissue>
    </source>
</reference>
<comment type="function">
    <text evidence="1">May be involved in the generation of 28S rRNA.</text>
</comment>
<comment type="subcellular location">
    <subcellularLocation>
        <location evidence="4">Nucleus</location>
    </subcellularLocation>
</comment>
<comment type="similarity">
    <text evidence="4">Belongs to the RRP1 family.</text>
</comment>
<protein>
    <recommendedName>
        <fullName>Ribosomal RNA processing protein 1 homolog</fullName>
    </recommendedName>
    <alternativeName>
        <fullName>NNP-1 homolog</fullName>
    </alternativeName>
    <alternativeName>
        <fullName>RRP1-like protein</fullName>
    </alternativeName>
</protein>
<gene>
    <name type="primary">Nnp-1</name>
    <name type="ORF">CG12396</name>
</gene>
<dbReference type="EMBL" id="AE014134">
    <property type="protein sequence ID" value="AAF53287.1"/>
    <property type="molecule type" value="Genomic_DNA"/>
</dbReference>
<dbReference type="EMBL" id="BT015271">
    <property type="protein sequence ID" value="AAT94500.1"/>
    <property type="molecule type" value="mRNA"/>
</dbReference>
<dbReference type="RefSeq" id="NP_651976.1">
    <property type="nucleotide sequence ID" value="NM_143719.3"/>
</dbReference>
<dbReference type="SMR" id="Q9VJZ7"/>
<dbReference type="BioGRID" id="69025">
    <property type="interactions" value="14"/>
</dbReference>
<dbReference type="DIP" id="DIP-20610N"/>
<dbReference type="FunCoup" id="Q9VJZ7">
    <property type="interactions" value="904"/>
</dbReference>
<dbReference type="IntAct" id="Q9VJZ7">
    <property type="interactions" value="41"/>
</dbReference>
<dbReference type="STRING" id="7227.FBpp0080052"/>
<dbReference type="iPTMnet" id="Q9VJZ7"/>
<dbReference type="PaxDb" id="7227-FBpp0080052"/>
<dbReference type="DNASU" id="44391"/>
<dbReference type="EnsemblMetazoa" id="FBtr0080473">
    <property type="protein sequence ID" value="FBpp0080052"/>
    <property type="gene ID" value="FBgn0022069"/>
</dbReference>
<dbReference type="GeneID" id="44391"/>
<dbReference type="KEGG" id="dme:Dmel_CG12396"/>
<dbReference type="UCSC" id="CG12396-RA">
    <property type="organism name" value="d. melanogaster"/>
</dbReference>
<dbReference type="AGR" id="FB:FBgn0022069"/>
<dbReference type="CTD" id="44391"/>
<dbReference type="FlyBase" id="FBgn0022069">
    <property type="gene designation" value="Nnp-1"/>
</dbReference>
<dbReference type="VEuPathDB" id="VectorBase:FBgn0022069"/>
<dbReference type="eggNOG" id="KOG3911">
    <property type="taxonomic scope" value="Eukaryota"/>
</dbReference>
<dbReference type="GeneTree" id="ENSGT00390000011821"/>
<dbReference type="HOGENOM" id="CLU_021225_0_0_1"/>
<dbReference type="InParanoid" id="Q9VJZ7"/>
<dbReference type="OMA" id="PKSDYYR"/>
<dbReference type="OrthoDB" id="2019504at2759"/>
<dbReference type="PhylomeDB" id="Q9VJZ7"/>
<dbReference type="SignaLink" id="Q9VJZ7"/>
<dbReference type="BioGRID-ORCS" id="44391">
    <property type="hits" value="0 hits in 3 CRISPR screens"/>
</dbReference>
<dbReference type="ChiTaRS" id="Nnp-1">
    <property type="organism name" value="fly"/>
</dbReference>
<dbReference type="GenomeRNAi" id="44391"/>
<dbReference type="PRO" id="PR:Q9VJZ7"/>
<dbReference type="Proteomes" id="UP000000803">
    <property type="component" value="Chromosome 2L"/>
</dbReference>
<dbReference type="Bgee" id="FBgn0022069">
    <property type="expression patterns" value="Expressed in wing disc and 98 other cell types or tissues"/>
</dbReference>
<dbReference type="GO" id="GO:0005634">
    <property type="term" value="C:nucleus"/>
    <property type="evidence" value="ECO:0000318"/>
    <property type="project" value="GO_Central"/>
</dbReference>
<dbReference type="GO" id="GO:0030688">
    <property type="term" value="C:preribosome, small subunit precursor"/>
    <property type="evidence" value="ECO:0007669"/>
    <property type="project" value="InterPro"/>
</dbReference>
<dbReference type="GO" id="GO:0006364">
    <property type="term" value="P:rRNA processing"/>
    <property type="evidence" value="ECO:0007669"/>
    <property type="project" value="UniProtKB-KW"/>
</dbReference>
<dbReference type="InterPro" id="IPR010301">
    <property type="entry name" value="RRP1"/>
</dbReference>
<dbReference type="PANTHER" id="PTHR13026">
    <property type="entry name" value="NNP-1 PROTEIN NOVEL NUCLEAR PROTEIN 1 NOP52"/>
    <property type="match status" value="1"/>
</dbReference>
<dbReference type="PANTHER" id="PTHR13026:SF0">
    <property type="entry name" value="RIBOSOMAL RNA PROCESSING 1B"/>
    <property type="match status" value="1"/>
</dbReference>
<dbReference type="Pfam" id="PF05997">
    <property type="entry name" value="Nop52"/>
    <property type="match status" value="1"/>
</dbReference>
<evidence type="ECO:0000250" key="1"/>
<evidence type="ECO:0000256" key="2">
    <source>
        <dbReference type="SAM" id="MobiDB-lite"/>
    </source>
</evidence>
<evidence type="ECO:0000269" key="3">
    <source>
    </source>
</evidence>
<evidence type="ECO:0000305" key="4"/>
<feature type="chain" id="PRO_0000096886" description="Ribosomal RNA processing protein 1 homolog">
    <location>
        <begin position="1"/>
        <end position="687"/>
    </location>
</feature>
<feature type="region of interest" description="Disordered" evidence="2">
    <location>
        <begin position="288"/>
        <end position="312"/>
    </location>
</feature>
<feature type="region of interest" description="Disordered" evidence="2">
    <location>
        <begin position="463"/>
        <end position="624"/>
    </location>
</feature>
<feature type="compositionally biased region" description="Acidic residues" evidence="2">
    <location>
        <begin position="288"/>
        <end position="298"/>
    </location>
</feature>
<feature type="compositionally biased region" description="Basic and acidic residues" evidence="2">
    <location>
        <begin position="463"/>
        <end position="488"/>
    </location>
</feature>
<feature type="compositionally biased region" description="Basic and acidic residues" evidence="2">
    <location>
        <begin position="497"/>
        <end position="520"/>
    </location>
</feature>
<feature type="compositionally biased region" description="Basic and acidic residues" evidence="2">
    <location>
        <begin position="527"/>
        <end position="543"/>
    </location>
</feature>
<feature type="compositionally biased region" description="Low complexity" evidence="2">
    <location>
        <begin position="554"/>
        <end position="564"/>
    </location>
</feature>
<feature type="compositionally biased region" description="Polar residues" evidence="2">
    <location>
        <begin position="596"/>
        <end position="608"/>
    </location>
</feature>
<feature type="modified residue" description="Phosphothreonine" evidence="3">
    <location>
        <position position="617"/>
    </location>
</feature>
<feature type="modified residue" description="Phosphothreonine" evidence="3">
    <location>
        <position position="620"/>
    </location>
</feature>
<feature type="modified residue" description="Phosphoserine" evidence="3">
    <location>
        <position position="622"/>
    </location>
</feature>
<organism>
    <name type="scientific">Drosophila melanogaster</name>
    <name type="common">Fruit fly</name>
    <dbReference type="NCBI Taxonomy" id="7227"/>
    <lineage>
        <taxon>Eukaryota</taxon>
        <taxon>Metazoa</taxon>
        <taxon>Ecdysozoa</taxon>
        <taxon>Arthropoda</taxon>
        <taxon>Hexapoda</taxon>
        <taxon>Insecta</taxon>
        <taxon>Pterygota</taxon>
        <taxon>Neoptera</taxon>
        <taxon>Endopterygota</taxon>
        <taxon>Diptera</taxon>
        <taxon>Brachycera</taxon>
        <taxon>Muscomorpha</taxon>
        <taxon>Ephydroidea</taxon>
        <taxon>Drosophilidae</taxon>
        <taxon>Drosophila</taxon>
        <taxon>Sophophora</taxon>
    </lineage>
</organism>